<name>KDSA_RALPJ</name>
<reference key="1">
    <citation type="submission" date="2008-05" db="EMBL/GenBank/DDBJ databases">
        <title>Complete sequence of chromosome 1 of Ralstonia pickettii 12J.</title>
        <authorList>
            <person name="Lucas S."/>
            <person name="Copeland A."/>
            <person name="Lapidus A."/>
            <person name="Glavina del Rio T."/>
            <person name="Dalin E."/>
            <person name="Tice H."/>
            <person name="Bruce D."/>
            <person name="Goodwin L."/>
            <person name="Pitluck S."/>
            <person name="Meincke L."/>
            <person name="Brettin T."/>
            <person name="Detter J.C."/>
            <person name="Han C."/>
            <person name="Kuske C.R."/>
            <person name="Schmutz J."/>
            <person name="Larimer F."/>
            <person name="Land M."/>
            <person name="Hauser L."/>
            <person name="Kyrpides N."/>
            <person name="Mikhailova N."/>
            <person name="Marsh T."/>
            <person name="Richardson P."/>
        </authorList>
    </citation>
    <scope>NUCLEOTIDE SEQUENCE [LARGE SCALE GENOMIC DNA]</scope>
    <source>
        <strain>12J</strain>
    </source>
</reference>
<dbReference type="EC" id="2.5.1.55" evidence="1"/>
<dbReference type="EMBL" id="CP001068">
    <property type="protein sequence ID" value="ACD26118.1"/>
    <property type="molecule type" value="Genomic_DNA"/>
</dbReference>
<dbReference type="SMR" id="B2U9C1"/>
<dbReference type="STRING" id="402626.Rpic_0970"/>
<dbReference type="KEGG" id="rpi:Rpic_0970"/>
<dbReference type="eggNOG" id="COG2877">
    <property type="taxonomic scope" value="Bacteria"/>
</dbReference>
<dbReference type="HOGENOM" id="CLU_036666_0_0_4"/>
<dbReference type="UniPathway" id="UPA00030"/>
<dbReference type="UniPathway" id="UPA00357">
    <property type="reaction ID" value="UER00474"/>
</dbReference>
<dbReference type="GO" id="GO:0005737">
    <property type="term" value="C:cytoplasm"/>
    <property type="evidence" value="ECO:0007669"/>
    <property type="project" value="UniProtKB-SubCell"/>
</dbReference>
<dbReference type="GO" id="GO:0008676">
    <property type="term" value="F:3-deoxy-8-phosphooctulonate synthase activity"/>
    <property type="evidence" value="ECO:0007669"/>
    <property type="project" value="UniProtKB-UniRule"/>
</dbReference>
<dbReference type="GO" id="GO:0019294">
    <property type="term" value="P:keto-3-deoxy-D-manno-octulosonic acid biosynthetic process"/>
    <property type="evidence" value="ECO:0007669"/>
    <property type="project" value="UniProtKB-UniRule"/>
</dbReference>
<dbReference type="Gene3D" id="3.20.20.70">
    <property type="entry name" value="Aldolase class I"/>
    <property type="match status" value="1"/>
</dbReference>
<dbReference type="HAMAP" id="MF_00056">
    <property type="entry name" value="KDO8P_synth"/>
    <property type="match status" value="1"/>
</dbReference>
<dbReference type="InterPro" id="IPR013785">
    <property type="entry name" value="Aldolase_TIM"/>
</dbReference>
<dbReference type="InterPro" id="IPR006218">
    <property type="entry name" value="DAHP1/KDSA"/>
</dbReference>
<dbReference type="InterPro" id="IPR006269">
    <property type="entry name" value="KDO8P_synthase"/>
</dbReference>
<dbReference type="NCBIfam" id="TIGR01362">
    <property type="entry name" value="KDO8P_synth"/>
    <property type="match status" value="1"/>
</dbReference>
<dbReference type="NCBIfam" id="NF003543">
    <property type="entry name" value="PRK05198.1"/>
    <property type="match status" value="1"/>
</dbReference>
<dbReference type="PANTHER" id="PTHR21057">
    <property type="entry name" value="PHOSPHO-2-DEHYDRO-3-DEOXYHEPTONATE ALDOLASE"/>
    <property type="match status" value="1"/>
</dbReference>
<dbReference type="Pfam" id="PF00793">
    <property type="entry name" value="DAHP_synth_1"/>
    <property type="match status" value="1"/>
</dbReference>
<dbReference type="SUPFAM" id="SSF51569">
    <property type="entry name" value="Aldolase"/>
    <property type="match status" value="1"/>
</dbReference>
<sequence>MKLCDFEVGLDKPFFLIAGTCVIESEQMAIDTAGTLKEITGALGIPFIYKSSFDKANRSSDASFRGLGMEEGLRILSEVRRQVGVPVLTDIHEIDEIKPVAEVVDVLQTPAFLCRQTDFIRACAQSGKPVNIKKGQFLAPHDMKNVIDKARHAARDAGLPEDNFMACERGASFGYNNLVSDMRSLAIMRETGAPVVFDATHSVQLPGGQGTSSGGQREFVPVLARAAIAVGVAGVFMETHPDPACAKSDGPNAVPLRRMKDLLSVLKELDALTKRSGFLENQFD</sequence>
<gene>
    <name evidence="1" type="primary">kdsA</name>
    <name type="ordered locus">Rpic_0970</name>
</gene>
<evidence type="ECO:0000255" key="1">
    <source>
        <dbReference type="HAMAP-Rule" id="MF_00056"/>
    </source>
</evidence>
<keyword id="KW-0963">Cytoplasm</keyword>
<keyword id="KW-0448">Lipopolysaccharide biosynthesis</keyword>
<keyword id="KW-0808">Transferase</keyword>
<proteinExistence type="inferred from homology"/>
<comment type="catalytic activity">
    <reaction evidence="1">
        <text>D-arabinose 5-phosphate + phosphoenolpyruvate + H2O = 3-deoxy-alpha-D-manno-2-octulosonate-8-phosphate + phosphate</text>
        <dbReference type="Rhea" id="RHEA:14053"/>
        <dbReference type="ChEBI" id="CHEBI:15377"/>
        <dbReference type="ChEBI" id="CHEBI:43474"/>
        <dbReference type="ChEBI" id="CHEBI:57693"/>
        <dbReference type="ChEBI" id="CHEBI:58702"/>
        <dbReference type="ChEBI" id="CHEBI:85985"/>
        <dbReference type="EC" id="2.5.1.55"/>
    </reaction>
</comment>
<comment type="pathway">
    <text evidence="1">Carbohydrate biosynthesis; 3-deoxy-D-manno-octulosonate biosynthesis; 3-deoxy-D-manno-octulosonate from D-ribulose 5-phosphate: step 2/3.</text>
</comment>
<comment type="pathway">
    <text evidence="1">Bacterial outer membrane biogenesis; lipopolysaccharide biosynthesis.</text>
</comment>
<comment type="subcellular location">
    <subcellularLocation>
        <location evidence="1">Cytoplasm</location>
    </subcellularLocation>
</comment>
<comment type="similarity">
    <text evidence="1">Belongs to the KdsA family.</text>
</comment>
<organism>
    <name type="scientific">Ralstonia pickettii (strain 12J)</name>
    <dbReference type="NCBI Taxonomy" id="402626"/>
    <lineage>
        <taxon>Bacteria</taxon>
        <taxon>Pseudomonadati</taxon>
        <taxon>Pseudomonadota</taxon>
        <taxon>Betaproteobacteria</taxon>
        <taxon>Burkholderiales</taxon>
        <taxon>Burkholderiaceae</taxon>
        <taxon>Ralstonia</taxon>
    </lineage>
</organism>
<feature type="chain" id="PRO_1000091827" description="2-dehydro-3-deoxyphosphooctonate aldolase">
    <location>
        <begin position="1"/>
        <end position="284"/>
    </location>
</feature>
<accession>B2U9C1</accession>
<protein>
    <recommendedName>
        <fullName evidence="1">2-dehydro-3-deoxyphosphooctonate aldolase</fullName>
        <ecNumber evidence="1">2.5.1.55</ecNumber>
    </recommendedName>
    <alternativeName>
        <fullName evidence="1">3-deoxy-D-manno-octulosonic acid 8-phosphate synthase</fullName>
    </alternativeName>
    <alternativeName>
        <fullName evidence="1">KDO-8-phosphate synthase</fullName>
        <shortName evidence="1">KDO 8-P synthase</shortName>
        <shortName evidence="1">KDOPS</shortName>
    </alternativeName>
    <alternativeName>
        <fullName evidence="1">Phospho-2-dehydro-3-deoxyoctonate aldolase</fullName>
    </alternativeName>
</protein>